<reference key="1">
    <citation type="journal article" date="2006" name="Lancet">
        <title>Complete genome sequence of USA300, an epidemic clone of community-acquired meticillin-resistant Staphylococcus aureus.</title>
        <authorList>
            <person name="Diep B.A."/>
            <person name="Gill S.R."/>
            <person name="Chang R.F."/>
            <person name="Phan T.H."/>
            <person name="Chen J.H."/>
            <person name="Davidson M.G."/>
            <person name="Lin F."/>
            <person name="Lin J."/>
            <person name="Carleton H.A."/>
            <person name="Mongodin E.F."/>
            <person name="Sensabaugh G.F."/>
            <person name="Perdreau-Remington F."/>
        </authorList>
    </citation>
    <scope>NUCLEOTIDE SEQUENCE [LARGE SCALE GENOMIC DNA]</scope>
    <source>
        <strain>USA300</strain>
    </source>
</reference>
<reference key="2">
    <citation type="journal article" date="2012" name="BMC Microbiol.">
        <title>Characterization of EssB, a protein required for secretion of ESAT-6 like proteins in Staphylococcus aureus.</title>
        <authorList>
            <person name="Chen Y.H."/>
            <person name="Anderson M."/>
            <person name="Hendrickx A.P."/>
            <person name="Missiakas D."/>
        </authorList>
    </citation>
    <scope>FUNCTION</scope>
    <scope>SUBUNIT</scope>
    <scope>SUBCELLULAR LOCATION</scope>
    <scope>DISRUPTION PHENOTYPE</scope>
    <source>
        <strain>USA300</strain>
    </source>
</reference>
<reference key="3">
    <citation type="journal article" date="2018" name="Arch. Microbiol.">
        <title>The transmembrane domain of the Staphylococcus aureus ESAT-6 component EssB mediates interaction with the integral membrane protein EsaA, facilitating partially regulated secretion in a heterologous host.</title>
        <authorList>
            <person name="Ahmed M.M."/>
            <person name="Aboshanab K.M."/>
            <person name="Ragab Y.M."/>
            <person name="Missiakas D.M."/>
            <person name="Aly K.A."/>
        </authorList>
    </citation>
    <scope>INTERACTION WITH ESAA</scope>
</reference>
<feature type="chain" id="PRO_0000437413" description="Type VII secretion system protein EssB">
    <location>
        <begin position="1"/>
        <end position="444"/>
    </location>
</feature>
<feature type="topological domain" description="Cytoplasmic" evidence="1">
    <location>
        <begin position="1"/>
        <end position="229"/>
    </location>
</feature>
<feature type="transmembrane region" description="Helical" evidence="2">
    <location>
        <begin position="230"/>
        <end position="250"/>
    </location>
</feature>
<feature type="topological domain" description="Extracellular" evidence="1">
    <location>
        <begin position="251"/>
        <end position="444"/>
    </location>
</feature>
<feature type="region of interest" description="Disordered" evidence="3">
    <location>
        <begin position="366"/>
        <end position="444"/>
    </location>
</feature>
<feature type="coiled-coil region" evidence="2">
    <location>
        <begin position="387"/>
        <end position="443"/>
    </location>
</feature>
<feature type="compositionally biased region" description="Basic and acidic residues" evidence="3">
    <location>
        <begin position="372"/>
        <end position="444"/>
    </location>
</feature>
<dbReference type="EMBL" id="CP000255">
    <property type="protein sequence ID" value="ABD21393.1"/>
    <property type="molecule type" value="Genomic_DNA"/>
</dbReference>
<dbReference type="RefSeq" id="WP_000240338.1">
    <property type="nucleotide sequence ID" value="NZ_CP027476.1"/>
</dbReference>
<dbReference type="SMR" id="A0A0H2XG66"/>
<dbReference type="KEGG" id="saa:SAUSA300_0282"/>
<dbReference type="HOGENOM" id="CLU_049737_0_0_9"/>
<dbReference type="OMA" id="FLHYGVK"/>
<dbReference type="Proteomes" id="UP000001939">
    <property type="component" value="Chromosome"/>
</dbReference>
<dbReference type="GO" id="GO:0005886">
    <property type="term" value="C:plasma membrane"/>
    <property type="evidence" value="ECO:0007669"/>
    <property type="project" value="UniProtKB-SubCell"/>
</dbReference>
<dbReference type="Gene3D" id="1.10.510.10">
    <property type="entry name" value="Transferase(Phosphotransferase) domain 1"/>
    <property type="match status" value="1"/>
</dbReference>
<dbReference type="Gene3D" id="1.25.40.680">
    <property type="entry name" value="Type VII secretion system EssB, C-terminal-like domain"/>
    <property type="match status" value="1"/>
</dbReference>
<dbReference type="InterPro" id="IPR018778">
    <property type="entry name" value="T7SS_EssB"/>
</dbReference>
<dbReference type="InterPro" id="IPR042565">
    <property type="entry name" value="T7SS_EssB_C"/>
</dbReference>
<dbReference type="NCBIfam" id="TIGR03926">
    <property type="entry name" value="T7_EssB"/>
    <property type="match status" value="1"/>
</dbReference>
<dbReference type="Pfam" id="PF10140">
    <property type="entry name" value="YukC"/>
    <property type="match status" value="1"/>
</dbReference>
<keyword id="KW-1003">Cell membrane</keyword>
<keyword id="KW-0175">Coiled coil</keyword>
<keyword id="KW-0472">Membrane</keyword>
<keyword id="KW-0812">Transmembrane</keyword>
<keyword id="KW-1133">Transmembrane helix</keyword>
<keyword id="KW-0843">Virulence</keyword>
<gene>
    <name evidence="6" type="primary">essB</name>
    <name evidence="8" type="ordered locus">SAUSA300_0282</name>
</gene>
<evidence type="ECO:0000250" key="1">
    <source>
        <dbReference type="UniProtKB" id="Q2G185"/>
    </source>
</evidence>
<evidence type="ECO:0000255" key="2"/>
<evidence type="ECO:0000256" key="3">
    <source>
        <dbReference type="SAM" id="MobiDB-lite"/>
    </source>
</evidence>
<evidence type="ECO:0000269" key="4">
    <source>
    </source>
</evidence>
<evidence type="ECO:0000269" key="5">
    <source>
    </source>
</evidence>
<evidence type="ECO:0000303" key="6">
    <source>
    </source>
</evidence>
<evidence type="ECO:0000305" key="7"/>
<evidence type="ECO:0000312" key="8">
    <source>
        <dbReference type="EMBL" id="ABD21393.1"/>
    </source>
</evidence>
<name>ESSB_STAA3</name>
<protein>
    <recommendedName>
        <fullName evidence="7">Type VII secretion system protein EssB</fullName>
    </recommendedName>
</protein>
<accession>A0A0H2XG66</accession>
<comment type="function">
    <text evidence="4">Component of the type VII secretion system (Ess). Required for the secretion of EsxA and proper accumulation of EssB and EssD.</text>
</comment>
<comment type="subunit">
    <text evidence="4 5">May oligomerize and interact with other membrane components to form the Ess system (PubMed:23006124). Interacts with EsaA (PubMed:29737367).</text>
</comment>
<comment type="subcellular location">
    <subcellularLocation>
        <location evidence="4">Cell membrane</location>
        <topology evidence="2">Single-pass membrane protein</topology>
    </subcellularLocation>
</comment>
<comment type="disruption phenotype">
    <text evidence="4">Mutants cannot secrete EsxA. Deletion also affects the production of several Ess factors.</text>
</comment>
<comment type="similarity">
    <text evidence="7">Belongs to the EssB family.</text>
</comment>
<sequence>MVKNHNPKNEMQDMLTPLDAEEAAKTKLRLDMREIPKSSIKPEHFHLMYLLEQHSPYFIDAELTELRDSFQIHYDINDNHTPFDNIKSFTKNEKLRYLLNIKNLEEVNRTRYTFVLAPDELFFTRDGLPIAKTRGLQNVVDPLPVSEAEFLTRYKALVICAFNEKQSFDALVEGNLELHKGTPFETKVIEAATLDLLTAFLDEQYQKQEQDYSQNYAYVRKVGHTVFKWVAIGMTTLSVLLIAFLAFLYFSVMKHNERIEKGYQAFVKDDYTQVLNTYDDLDGKKLDKEALYIYAKSYIQTNKQGLEKDKKENLLNNVTPNSNKDYLLYWMELGQGHLDEAINIATYLDDNDITKLALINKLNEIKNNGDLSNDKRSEETKKYNDKLQDILDKEKQVKDEKAKSEEEKAKAKDEKLKQQEENEKKQKEQAQKDKEKRQEAERKK</sequence>
<proteinExistence type="evidence at protein level"/>
<organism>
    <name type="scientific">Staphylococcus aureus (strain USA300)</name>
    <dbReference type="NCBI Taxonomy" id="367830"/>
    <lineage>
        <taxon>Bacteria</taxon>
        <taxon>Bacillati</taxon>
        <taxon>Bacillota</taxon>
        <taxon>Bacilli</taxon>
        <taxon>Bacillales</taxon>
        <taxon>Staphylococcaceae</taxon>
        <taxon>Staphylococcus</taxon>
    </lineage>
</organism>